<dbReference type="EMBL" id="AB046787">
    <property type="protein sequence ID" value="BAB13393.1"/>
    <property type="status" value="ALT_INIT"/>
    <property type="molecule type" value="mRNA"/>
</dbReference>
<dbReference type="EMBL" id="AL359186">
    <property type="status" value="NOT_ANNOTATED_CDS"/>
    <property type="molecule type" value="Genomic_DNA"/>
</dbReference>
<dbReference type="EMBL" id="AL354864">
    <property type="status" value="NOT_ANNOTATED_CDS"/>
    <property type="molecule type" value="Genomic_DNA"/>
</dbReference>
<dbReference type="EMBL" id="CH471059">
    <property type="protein sequence ID" value="EAX07400.1"/>
    <property type="molecule type" value="Genomic_DNA"/>
</dbReference>
<dbReference type="EMBL" id="BC152450">
    <property type="protein sequence ID" value="AAI52451.1"/>
    <property type="molecule type" value="mRNA"/>
</dbReference>
<dbReference type="CCDS" id="CCDS397.1"/>
<dbReference type="RefSeq" id="NP_060099.2">
    <property type="nucleotide sequence ID" value="NM_017629.3"/>
</dbReference>
<dbReference type="PDB" id="6OON">
    <property type="method" value="X-ray"/>
    <property type="resolution" value="1.90 A"/>
    <property type="chains" value="A=1-861"/>
</dbReference>
<dbReference type="PDBsum" id="6OON"/>
<dbReference type="SMR" id="Q9HCK5"/>
<dbReference type="BioGRID" id="128178">
    <property type="interactions" value="231"/>
</dbReference>
<dbReference type="ComplexPortal" id="CPX-8623">
    <property type="entry name" value="miRNA RISC complex, TNRC6A variant"/>
</dbReference>
<dbReference type="ComplexPortal" id="CPX-8624">
    <property type="entry name" value="miRNA RISC complex, TNRC6B variant"/>
</dbReference>
<dbReference type="ComplexPortal" id="CPX-8625">
    <property type="entry name" value="miRNA RISC complex, TNRC6C variant"/>
</dbReference>
<dbReference type="CORUM" id="Q9HCK5"/>
<dbReference type="FunCoup" id="Q9HCK5">
    <property type="interactions" value="1502"/>
</dbReference>
<dbReference type="IntAct" id="Q9HCK5">
    <property type="interactions" value="116"/>
</dbReference>
<dbReference type="MINT" id="Q9HCK5"/>
<dbReference type="STRING" id="9606.ENSP00000362306"/>
<dbReference type="iPTMnet" id="Q9HCK5"/>
<dbReference type="PhosphoSitePlus" id="Q9HCK5"/>
<dbReference type="BioMuta" id="AGO4"/>
<dbReference type="DMDM" id="38372393"/>
<dbReference type="jPOST" id="Q9HCK5"/>
<dbReference type="MassIVE" id="Q9HCK5"/>
<dbReference type="PaxDb" id="9606-ENSP00000362306"/>
<dbReference type="PeptideAtlas" id="Q9HCK5"/>
<dbReference type="ProteomicsDB" id="81747"/>
<dbReference type="Pumba" id="Q9HCK5"/>
<dbReference type="Antibodypedia" id="31591">
    <property type="antibodies" value="164 antibodies from 28 providers"/>
</dbReference>
<dbReference type="DNASU" id="192670"/>
<dbReference type="Ensembl" id="ENST00000373210.4">
    <property type="protein sequence ID" value="ENSP00000362306.3"/>
    <property type="gene ID" value="ENSG00000134698.11"/>
</dbReference>
<dbReference type="GeneID" id="192670"/>
<dbReference type="KEGG" id="hsa:192670"/>
<dbReference type="MANE-Select" id="ENST00000373210.4">
    <property type="protein sequence ID" value="ENSP00000362306.3"/>
    <property type="RefSeq nucleotide sequence ID" value="NM_017629.4"/>
    <property type="RefSeq protein sequence ID" value="NP_060099.2"/>
</dbReference>
<dbReference type="UCSC" id="uc001bzj.3">
    <property type="organism name" value="human"/>
</dbReference>
<dbReference type="AGR" id="HGNC:18424"/>
<dbReference type="CTD" id="192670"/>
<dbReference type="DisGeNET" id="192670"/>
<dbReference type="GeneCards" id="AGO4"/>
<dbReference type="HGNC" id="HGNC:18424">
    <property type="gene designation" value="AGO4"/>
</dbReference>
<dbReference type="HPA" id="ENSG00000134698">
    <property type="expression patterns" value="Low tissue specificity"/>
</dbReference>
<dbReference type="MIM" id="607356">
    <property type="type" value="gene"/>
</dbReference>
<dbReference type="neXtProt" id="NX_Q9HCK5"/>
<dbReference type="OpenTargets" id="ENSG00000134698"/>
<dbReference type="PharmGKB" id="PA38330"/>
<dbReference type="VEuPathDB" id="HostDB:ENSG00000134698"/>
<dbReference type="eggNOG" id="KOG1041">
    <property type="taxonomic scope" value="Eukaryota"/>
</dbReference>
<dbReference type="GeneTree" id="ENSGT00940000158729"/>
<dbReference type="HOGENOM" id="CLU_004544_4_3_1"/>
<dbReference type="InParanoid" id="Q9HCK5"/>
<dbReference type="OMA" id="RVRITHI"/>
<dbReference type="OrthoDB" id="10252740at2759"/>
<dbReference type="PAN-GO" id="Q9HCK5">
    <property type="GO annotations" value="3 GO annotations based on evolutionary models"/>
</dbReference>
<dbReference type="PhylomeDB" id="Q9HCK5"/>
<dbReference type="TreeFam" id="TF101510"/>
<dbReference type="PathwayCommons" id="Q9HCK5"/>
<dbReference type="Reactome" id="R-HSA-1912408">
    <property type="pathway name" value="Pre-NOTCH Transcription and Translation"/>
</dbReference>
<dbReference type="Reactome" id="R-HSA-203927">
    <property type="pathway name" value="MicroRNA (miRNA) biogenesis"/>
</dbReference>
<dbReference type="Reactome" id="R-HSA-2559580">
    <property type="pathway name" value="Oxidative Stress Induced Senescence"/>
</dbReference>
<dbReference type="Reactome" id="R-HSA-2559585">
    <property type="pathway name" value="Oncogene Induced Senescence"/>
</dbReference>
<dbReference type="Reactome" id="R-HSA-4086398">
    <property type="pathway name" value="Ca2+ pathway"/>
</dbReference>
<dbReference type="Reactome" id="R-HSA-426486">
    <property type="pathway name" value="Small interfering RNA (siRNA) biogenesis"/>
</dbReference>
<dbReference type="Reactome" id="R-HSA-426496">
    <property type="pathway name" value="Post-transcriptional silencing by small RNAs"/>
</dbReference>
<dbReference type="Reactome" id="R-HSA-5628897">
    <property type="pathway name" value="TP53 Regulates Metabolic Genes"/>
</dbReference>
<dbReference type="Reactome" id="R-HSA-5687128">
    <property type="pathway name" value="MAPK6/MAPK4 signaling"/>
</dbReference>
<dbReference type="Reactome" id="R-HSA-8853884">
    <property type="pathway name" value="Transcriptional Regulation by VENTX"/>
</dbReference>
<dbReference type="Reactome" id="R-HSA-8934593">
    <property type="pathway name" value="Regulation of RUNX1 Expression and Activity"/>
</dbReference>
<dbReference type="Reactome" id="R-HSA-8936459">
    <property type="pathway name" value="RUNX1 regulates genes involved in megakaryocyte differentiation and platelet function"/>
</dbReference>
<dbReference type="Reactome" id="R-HSA-8943723">
    <property type="pathway name" value="Regulation of PTEN mRNA translation"/>
</dbReference>
<dbReference type="Reactome" id="R-HSA-8948700">
    <property type="pathway name" value="Competing endogenous RNAs (ceRNAs) regulate PTEN translation"/>
</dbReference>
<dbReference type="Reactome" id="R-HSA-8986944">
    <property type="pathway name" value="Transcriptional Regulation by MECP2"/>
</dbReference>
<dbReference type="Reactome" id="R-HSA-9018519">
    <property type="pathway name" value="Estrogen-dependent gene expression"/>
</dbReference>
<dbReference type="Reactome" id="R-HSA-9022692">
    <property type="pathway name" value="Regulation of MECP2 expression and activity"/>
</dbReference>
<dbReference type="Reactome" id="R-HSA-9029569">
    <property type="pathway name" value="NR1H3 &amp; NR1H2 regulate gene expression linked to cholesterol transport and efflux"/>
</dbReference>
<dbReference type="Reactome" id="R-HSA-9725371">
    <property type="pathway name" value="Nuclear events stimulated by ALK signaling in cancer"/>
</dbReference>
<dbReference type="Reactome" id="R-HSA-9759811">
    <property type="pathway name" value="Regulation of CDH11 mRNA translation by microRNAs"/>
</dbReference>
<dbReference type="Reactome" id="R-HSA-9768778">
    <property type="pathway name" value="Regulation of NPAS4 mRNA translation"/>
</dbReference>
<dbReference type="Reactome" id="R-HSA-9824594">
    <property type="pathway name" value="Regulation of MITF-M-dependent genes involved in apoptosis"/>
</dbReference>
<dbReference type="Reactome" id="R-HSA-9839394">
    <property type="pathway name" value="TGFBR3 expression"/>
</dbReference>
<dbReference type="SignaLink" id="Q9HCK5"/>
<dbReference type="BioGRID-ORCS" id="192670">
    <property type="hits" value="15 hits in 1150 CRISPR screens"/>
</dbReference>
<dbReference type="CD-CODE" id="232F8A39">
    <property type="entry name" value="P-body"/>
</dbReference>
<dbReference type="CD-CODE" id="DEE660B4">
    <property type="entry name" value="Stress granule"/>
</dbReference>
<dbReference type="ChiTaRS" id="AGO4">
    <property type="organism name" value="human"/>
</dbReference>
<dbReference type="GenomeRNAi" id="192670"/>
<dbReference type="Pharos" id="Q9HCK5">
    <property type="development level" value="Tbio"/>
</dbReference>
<dbReference type="PRO" id="PR:Q9HCK5"/>
<dbReference type="Proteomes" id="UP000005640">
    <property type="component" value="Chromosome 1"/>
</dbReference>
<dbReference type="RNAct" id="Q9HCK5">
    <property type="molecule type" value="protein"/>
</dbReference>
<dbReference type="Bgee" id="ENSG00000134698">
    <property type="expression patterns" value="Expressed in monocyte and 179 other cell types or tissues"/>
</dbReference>
<dbReference type="GO" id="GO:0005737">
    <property type="term" value="C:cytoplasm"/>
    <property type="evidence" value="ECO:0000314"/>
    <property type="project" value="BHF-UCL"/>
</dbReference>
<dbReference type="GO" id="GO:0036464">
    <property type="term" value="C:cytoplasmic ribonucleoprotein granule"/>
    <property type="evidence" value="ECO:0000314"/>
    <property type="project" value="HPA"/>
</dbReference>
<dbReference type="GO" id="GO:0005829">
    <property type="term" value="C:cytosol"/>
    <property type="evidence" value="ECO:0000314"/>
    <property type="project" value="HPA"/>
</dbReference>
<dbReference type="GO" id="GO:0016020">
    <property type="term" value="C:membrane"/>
    <property type="evidence" value="ECO:0007005"/>
    <property type="project" value="UniProtKB"/>
</dbReference>
<dbReference type="GO" id="GO:0005634">
    <property type="term" value="C:nucleus"/>
    <property type="evidence" value="ECO:0000318"/>
    <property type="project" value="GO_Central"/>
</dbReference>
<dbReference type="GO" id="GO:0000932">
    <property type="term" value="C:P-body"/>
    <property type="evidence" value="ECO:0007669"/>
    <property type="project" value="UniProtKB-SubCell"/>
</dbReference>
<dbReference type="GO" id="GO:0016442">
    <property type="term" value="C:RISC complex"/>
    <property type="evidence" value="ECO:0000314"/>
    <property type="project" value="BHF-UCL"/>
</dbReference>
<dbReference type="GO" id="GO:0070578">
    <property type="term" value="C:RISC-loading complex"/>
    <property type="evidence" value="ECO:0000314"/>
    <property type="project" value="BHF-UCL"/>
</dbReference>
<dbReference type="GO" id="GO:0003725">
    <property type="term" value="F:double-stranded RNA binding"/>
    <property type="evidence" value="ECO:0000314"/>
    <property type="project" value="BHF-UCL"/>
</dbReference>
<dbReference type="GO" id="GO:0035198">
    <property type="term" value="F:miRNA binding"/>
    <property type="evidence" value="ECO:0000314"/>
    <property type="project" value="BHF-UCL"/>
</dbReference>
<dbReference type="GO" id="GO:0004521">
    <property type="term" value="F:RNA endonuclease activity"/>
    <property type="evidence" value="ECO:0000318"/>
    <property type="project" value="GO_Central"/>
</dbReference>
<dbReference type="GO" id="GO:0003727">
    <property type="term" value="F:single-stranded RNA binding"/>
    <property type="evidence" value="ECO:0000314"/>
    <property type="project" value="BHF-UCL"/>
</dbReference>
<dbReference type="GO" id="GO:0008584">
    <property type="term" value="P:male gonad development"/>
    <property type="evidence" value="ECO:0007669"/>
    <property type="project" value="Ensembl"/>
</dbReference>
<dbReference type="GO" id="GO:0007140">
    <property type="term" value="P:male meiotic nuclear division"/>
    <property type="evidence" value="ECO:0007669"/>
    <property type="project" value="Ensembl"/>
</dbReference>
<dbReference type="GO" id="GO:0010586">
    <property type="term" value="P:miRNA metabolic process"/>
    <property type="evidence" value="ECO:0007669"/>
    <property type="project" value="Ensembl"/>
</dbReference>
<dbReference type="GO" id="GO:0035196">
    <property type="term" value="P:miRNA processing"/>
    <property type="evidence" value="ECO:0000315"/>
    <property type="project" value="BHF-UCL"/>
</dbReference>
<dbReference type="GO" id="GO:0035278">
    <property type="term" value="P:miRNA-mediated gene silencing by inhibition of translation"/>
    <property type="evidence" value="ECO:0000314"/>
    <property type="project" value="UniProtKB"/>
</dbReference>
<dbReference type="GO" id="GO:0006402">
    <property type="term" value="P:mRNA catabolic process"/>
    <property type="evidence" value="ECO:0000314"/>
    <property type="project" value="UniProtKB"/>
</dbReference>
<dbReference type="GO" id="GO:0043066">
    <property type="term" value="P:negative regulation of apoptotic process"/>
    <property type="evidence" value="ECO:0007669"/>
    <property type="project" value="Ensembl"/>
</dbReference>
<dbReference type="GO" id="GO:0031054">
    <property type="term" value="P:pre-miRNA processing"/>
    <property type="evidence" value="ECO:0000314"/>
    <property type="project" value="BHF-UCL"/>
</dbReference>
<dbReference type="GO" id="GO:0022604">
    <property type="term" value="P:regulation of cell morphogenesis"/>
    <property type="evidence" value="ECO:0007669"/>
    <property type="project" value="Ensembl"/>
</dbReference>
<dbReference type="GO" id="GO:0035194">
    <property type="term" value="P:regulatory ncRNA-mediated post-transcriptional gene silencing"/>
    <property type="evidence" value="ECO:0000318"/>
    <property type="project" value="GO_Central"/>
</dbReference>
<dbReference type="GO" id="GO:0070922">
    <property type="term" value="P:RISC complex assembly"/>
    <property type="evidence" value="ECO:0000314"/>
    <property type="project" value="BHF-UCL"/>
</dbReference>
<dbReference type="GO" id="GO:0007130">
    <property type="term" value="P:synaptonemal complex assembly"/>
    <property type="evidence" value="ECO:0007669"/>
    <property type="project" value="Ensembl"/>
</dbReference>
<dbReference type="CDD" id="cd02846">
    <property type="entry name" value="PAZ_argonaute_like"/>
    <property type="match status" value="1"/>
</dbReference>
<dbReference type="CDD" id="cd04657">
    <property type="entry name" value="Piwi_ago-like"/>
    <property type="match status" value="1"/>
</dbReference>
<dbReference type="FunFam" id="2.170.260.10:FF:000001">
    <property type="entry name" value="Protein argonaute-2"/>
    <property type="match status" value="1"/>
</dbReference>
<dbReference type="FunFam" id="3.30.420.10:FF:000001">
    <property type="entry name" value="Protein argonaute-2"/>
    <property type="match status" value="1"/>
</dbReference>
<dbReference type="FunFam" id="3.40.50.2300:FF:000005">
    <property type="entry name" value="Protein argonaute-2"/>
    <property type="match status" value="1"/>
</dbReference>
<dbReference type="Gene3D" id="3.40.50.2300">
    <property type="match status" value="1"/>
</dbReference>
<dbReference type="Gene3D" id="2.170.260.10">
    <property type="entry name" value="paz domain"/>
    <property type="match status" value="1"/>
</dbReference>
<dbReference type="Gene3D" id="3.30.420.10">
    <property type="entry name" value="Ribonuclease H-like superfamily/Ribonuclease H"/>
    <property type="match status" value="1"/>
</dbReference>
<dbReference type="HAMAP" id="MF_03033">
    <property type="entry name" value="AGO4"/>
    <property type="match status" value="1"/>
</dbReference>
<dbReference type="InterPro" id="IPR028604">
    <property type="entry name" value="AGO4"/>
</dbReference>
<dbReference type="InterPro" id="IPR014811">
    <property type="entry name" value="ArgoL1"/>
</dbReference>
<dbReference type="InterPro" id="IPR032472">
    <property type="entry name" value="ArgoL2"/>
</dbReference>
<dbReference type="InterPro" id="IPR032473">
    <property type="entry name" value="Argonaute_Mid_dom"/>
</dbReference>
<dbReference type="InterPro" id="IPR032474">
    <property type="entry name" value="Argonaute_N"/>
</dbReference>
<dbReference type="InterPro" id="IPR003100">
    <property type="entry name" value="PAZ_dom"/>
</dbReference>
<dbReference type="InterPro" id="IPR036085">
    <property type="entry name" value="PAZ_dom_sf"/>
</dbReference>
<dbReference type="InterPro" id="IPR003165">
    <property type="entry name" value="Piwi"/>
</dbReference>
<dbReference type="InterPro" id="IPR045246">
    <property type="entry name" value="Piwi_ago-like"/>
</dbReference>
<dbReference type="InterPro" id="IPR012337">
    <property type="entry name" value="RNaseH-like_sf"/>
</dbReference>
<dbReference type="InterPro" id="IPR036397">
    <property type="entry name" value="RNaseH_sf"/>
</dbReference>
<dbReference type="PANTHER" id="PTHR22891">
    <property type="entry name" value="EUKARYOTIC TRANSLATION INITIATION FACTOR 2C"/>
    <property type="match status" value="1"/>
</dbReference>
<dbReference type="Pfam" id="PF08699">
    <property type="entry name" value="ArgoL1"/>
    <property type="match status" value="1"/>
</dbReference>
<dbReference type="Pfam" id="PF16488">
    <property type="entry name" value="ArgoL2"/>
    <property type="match status" value="1"/>
</dbReference>
<dbReference type="Pfam" id="PF16487">
    <property type="entry name" value="ArgoMid"/>
    <property type="match status" value="1"/>
</dbReference>
<dbReference type="Pfam" id="PF16486">
    <property type="entry name" value="ArgoN"/>
    <property type="match status" value="1"/>
</dbReference>
<dbReference type="Pfam" id="PF02170">
    <property type="entry name" value="PAZ"/>
    <property type="match status" value="1"/>
</dbReference>
<dbReference type="Pfam" id="PF02171">
    <property type="entry name" value="Piwi"/>
    <property type="match status" value="1"/>
</dbReference>
<dbReference type="SMART" id="SM01163">
    <property type="entry name" value="DUF1785"/>
    <property type="match status" value="1"/>
</dbReference>
<dbReference type="SMART" id="SM00949">
    <property type="entry name" value="PAZ"/>
    <property type="match status" value="1"/>
</dbReference>
<dbReference type="SMART" id="SM00950">
    <property type="entry name" value="Piwi"/>
    <property type="match status" value="1"/>
</dbReference>
<dbReference type="SUPFAM" id="SSF101690">
    <property type="entry name" value="PAZ domain"/>
    <property type="match status" value="1"/>
</dbReference>
<dbReference type="SUPFAM" id="SSF53098">
    <property type="entry name" value="Ribonuclease H-like"/>
    <property type="match status" value="1"/>
</dbReference>
<dbReference type="PROSITE" id="PS50821">
    <property type="entry name" value="PAZ"/>
    <property type="match status" value="1"/>
</dbReference>
<dbReference type="PROSITE" id="PS50822">
    <property type="entry name" value="PIWI"/>
    <property type="match status" value="1"/>
</dbReference>
<gene>
    <name type="primary">AGO4</name>
    <name type="synonym">EIF2C4</name>
    <name type="synonym">KIAA1567</name>
</gene>
<reference key="1">
    <citation type="journal article" date="2000" name="DNA Res.">
        <title>Prediction of the coding sequences of unidentified human genes. XVIII. The complete sequences of 100 new cDNA clones from brain which code for large proteins in vitro.</title>
        <authorList>
            <person name="Nagase T."/>
            <person name="Kikuno R."/>
            <person name="Nakayama M."/>
            <person name="Hirosawa M."/>
            <person name="Ohara O."/>
        </authorList>
    </citation>
    <scope>NUCLEOTIDE SEQUENCE [LARGE SCALE MRNA]</scope>
    <source>
        <tissue>Brain</tissue>
    </source>
</reference>
<reference key="2">
    <citation type="journal article" date="2006" name="Nature">
        <title>The DNA sequence and biological annotation of human chromosome 1.</title>
        <authorList>
            <person name="Gregory S.G."/>
            <person name="Barlow K.F."/>
            <person name="McLay K.E."/>
            <person name="Kaul R."/>
            <person name="Swarbreck D."/>
            <person name="Dunham A."/>
            <person name="Scott C.E."/>
            <person name="Howe K.L."/>
            <person name="Woodfine K."/>
            <person name="Spencer C.C.A."/>
            <person name="Jones M.C."/>
            <person name="Gillson C."/>
            <person name="Searle S."/>
            <person name="Zhou Y."/>
            <person name="Kokocinski F."/>
            <person name="McDonald L."/>
            <person name="Evans R."/>
            <person name="Phillips K."/>
            <person name="Atkinson A."/>
            <person name="Cooper R."/>
            <person name="Jones C."/>
            <person name="Hall R.E."/>
            <person name="Andrews T.D."/>
            <person name="Lloyd C."/>
            <person name="Ainscough R."/>
            <person name="Almeida J.P."/>
            <person name="Ambrose K.D."/>
            <person name="Anderson F."/>
            <person name="Andrew R.W."/>
            <person name="Ashwell R.I.S."/>
            <person name="Aubin K."/>
            <person name="Babbage A.K."/>
            <person name="Bagguley C.L."/>
            <person name="Bailey J."/>
            <person name="Beasley H."/>
            <person name="Bethel G."/>
            <person name="Bird C.P."/>
            <person name="Bray-Allen S."/>
            <person name="Brown J.Y."/>
            <person name="Brown A.J."/>
            <person name="Buckley D."/>
            <person name="Burton J."/>
            <person name="Bye J."/>
            <person name="Carder C."/>
            <person name="Chapman J.C."/>
            <person name="Clark S.Y."/>
            <person name="Clarke G."/>
            <person name="Clee C."/>
            <person name="Cobley V."/>
            <person name="Collier R.E."/>
            <person name="Corby N."/>
            <person name="Coville G.J."/>
            <person name="Davies J."/>
            <person name="Deadman R."/>
            <person name="Dunn M."/>
            <person name="Earthrowl M."/>
            <person name="Ellington A.G."/>
            <person name="Errington H."/>
            <person name="Frankish A."/>
            <person name="Frankland J."/>
            <person name="French L."/>
            <person name="Garner P."/>
            <person name="Garnett J."/>
            <person name="Gay L."/>
            <person name="Ghori M.R.J."/>
            <person name="Gibson R."/>
            <person name="Gilby L.M."/>
            <person name="Gillett W."/>
            <person name="Glithero R.J."/>
            <person name="Grafham D.V."/>
            <person name="Griffiths C."/>
            <person name="Griffiths-Jones S."/>
            <person name="Grocock R."/>
            <person name="Hammond S."/>
            <person name="Harrison E.S.I."/>
            <person name="Hart E."/>
            <person name="Haugen E."/>
            <person name="Heath P.D."/>
            <person name="Holmes S."/>
            <person name="Holt K."/>
            <person name="Howden P.J."/>
            <person name="Hunt A.R."/>
            <person name="Hunt S.E."/>
            <person name="Hunter G."/>
            <person name="Isherwood J."/>
            <person name="James R."/>
            <person name="Johnson C."/>
            <person name="Johnson D."/>
            <person name="Joy A."/>
            <person name="Kay M."/>
            <person name="Kershaw J.K."/>
            <person name="Kibukawa M."/>
            <person name="Kimberley A.M."/>
            <person name="King A."/>
            <person name="Knights A.J."/>
            <person name="Lad H."/>
            <person name="Laird G."/>
            <person name="Lawlor S."/>
            <person name="Leongamornlert D.A."/>
            <person name="Lloyd D.M."/>
            <person name="Loveland J."/>
            <person name="Lovell J."/>
            <person name="Lush M.J."/>
            <person name="Lyne R."/>
            <person name="Martin S."/>
            <person name="Mashreghi-Mohammadi M."/>
            <person name="Matthews L."/>
            <person name="Matthews N.S.W."/>
            <person name="McLaren S."/>
            <person name="Milne S."/>
            <person name="Mistry S."/>
            <person name="Moore M.J.F."/>
            <person name="Nickerson T."/>
            <person name="O'Dell C.N."/>
            <person name="Oliver K."/>
            <person name="Palmeiri A."/>
            <person name="Palmer S.A."/>
            <person name="Parker A."/>
            <person name="Patel D."/>
            <person name="Pearce A.V."/>
            <person name="Peck A.I."/>
            <person name="Pelan S."/>
            <person name="Phelps K."/>
            <person name="Phillimore B.J."/>
            <person name="Plumb R."/>
            <person name="Rajan J."/>
            <person name="Raymond C."/>
            <person name="Rouse G."/>
            <person name="Saenphimmachak C."/>
            <person name="Sehra H.K."/>
            <person name="Sheridan E."/>
            <person name="Shownkeen R."/>
            <person name="Sims S."/>
            <person name="Skuce C.D."/>
            <person name="Smith M."/>
            <person name="Steward C."/>
            <person name="Subramanian S."/>
            <person name="Sycamore N."/>
            <person name="Tracey A."/>
            <person name="Tromans A."/>
            <person name="Van Helmond Z."/>
            <person name="Wall M."/>
            <person name="Wallis J.M."/>
            <person name="White S."/>
            <person name="Whitehead S.L."/>
            <person name="Wilkinson J.E."/>
            <person name="Willey D.L."/>
            <person name="Williams H."/>
            <person name="Wilming L."/>
            <person name="Wray P.W."/>
            <person name="Wu Z."/>
            <person name="Coulson A."/>
            <person name="Vaudin M."/>
            <person name="Sulston J.E."/>
            <person name="Durbin R.M."/>
            <person name="Hubbard T."/>
            <person name="Wooster R."/>
            <person name="Dunham I."/>
            <person name="Carter N.P."/>
            <person name="McVean G."/>
            <person name="Ross M.T."/>
            <person name="Harrow J."/>
            <person name="Olson M.V."/>
            <person name="Beck S."/>
            <person name="Rogers J."/>
            <person name="Bentley D.R."/>
        </authorList>
    </citation>
    <scope>NUCLEOTIDE SEQUENCE [LARGE SCALE GENOMIC DNA]</scope>
</reference>
<reference key="3">
    <citation type="submission" date="2005-09" db="EMBL/GenBank/DDBJ databases">
        <authorList>
            <person name="Mural R.J."/>
            <person name="Istrail S."/>
            <person name="Sutton G."/>
            <person name="Florea L."/>
            <person name="Halpern A.L."/>
            <person name="Mobarry C.M."/>
            <person name="Lippert R."/>
            <person name="Walenz B."/>
            <person name="Shatkay H."/>
            <person name="Dew I."/>
            <person name="Miller J.R."/>
            <person name="Flanigan M.J."/>
            <person name="Edwards N.J."/>
            <person name="Bolanos R."/>
            <person name="Fasulo D."/>
            <person name="Halldorsson B.V."/>
            <person name="Hannenhalli S."/>
            <person name="Turner R."/>
            <person name="Yooseph S."/>
            <person name="Lu F."/>
            <person name="Nusskern D.R."/>
            <person name="Shue B.C."/>
            <person name="Zheng X.H."/>
            <person name="Zhong F."/>
            <person name="Delcher A.L."/>
            <person name="Huson D.H."/>
            <person name="Kravitz S.A."/>
            <person name="Mouchard L."/>
            <person name="Reinert K."/>
            <person name="Remington K.A."/>
            <person name="Clark A.G."/>
            <person name="Waterman M.S."/>
            <person name="Eichler E.E."/>
            <person name="Adams M.D."/>
            <person name="Hunkapiller M.W."/>
            <person name="Myers E.W."/>
            <person name="Venter J.C."/>
        </authorList>
    </citation>
    <scope>NUCLEOTIDE SEQUENCE [LARGE SCALE GENOMIC DNA]</scope>
</reference>
<reference key="4">
    <citation type="journal article" date="2004" name="Genome Res.">
        <title>The status, quality, and expansion of the NIH full-length cDNA project: the Mammalian Gene Collection (MGC).</title>
        <authorList>
            <consortium name="The MGC Project Team"/>
        </authorList>
    </citation>
    <scope>NUCLEOTIDE SEQUENCE [LARGE SCALE MRNA]</scope>
</reference>
<reference key="5">
    <citation type="journal article" date="2004" name="Mol. Cell">
        <title>Human Argonaute2 mediates RNA cleavage targeted by miRNAs and siRNAs.</title>
        <authorList>
            <person name="Meister G."/>
            <person name="Landthaler M."/>
            <person name="Patkaniowska A."/>
            <person name="Dorsett Y."/>
            <person name="Teng G."/>
            <person name="Tuschl T."/>
        </authorList>
    </citation>
    <scope>ASSOCIATION WITH MIRNA</scope>
</reference>
<reference key="6">
    <citation type="journal article" date="2004" name="RNA">
        <title>Tethering of human Ago proteins to mRNA mimics the miRNA-mediated repression of protein synthesis.</title>
        <authorList>
            <person name="Pillai R.S."/>
            <person name="Artus C.G."/>
            <person name="Filipowicz W."/>
        </authorList>
    </citation>
    <scope>FUNCTION</scope>
</reference>
<reference key="7">
    <citation type="journal article" date="2005" name="Cell">
        <title>Involvement of microRNA in AU-rich element-mediated mRNA instability.</title>
        <authorList>
            <person name="Jing Q."/>
            <person name="Huang S."/>
            <person name="Guth S."/>
            <person name="Zarubin T."/>
            <person name="Motoyama A."/>
            <person name="Chen J."/>
            <person name="Di Padova F."/>
            <person name="Lin S.C."/>
            <person name="Gram H."/>
            <person name="Han J."/>
        </authorList>
    </citation>
    <scope>INTERACTION WITH ZFP36</scope>
</reference>
<reference key="8">
    <citation type="journal article" date="2005" name="Science">
        <title>Inhibition of translational initiation by Let-7 MicroRNA in human cells.</title>
        <authorList>
            <person name="Pillai R.S."/>
            <person name="Bhattacharyya S.N."/>
            <person name="Artus C.G."/>
            <person name="Zoller T."/>
            <person name="Cougot N."/>
            <person name="Basyuk E."/>
            <person name="Bertrand E."/>
            <person name="Filipowicz W."/>
        </authorList>
    </citation>
    <scope>SUBCELLULAR LOCATION</scope>
</reference>
<reference key="9">
    <citation type="journal article" date="2008" name="Curr. Biol.">
        <title>Importance of translation and nonnucleolytic ago proteins for on-target RNA interference.</title>
        <authorList>
            <person name="Wu L."/>
            <person name="Fan J."/>
            <person name="Belasco J.G."/>
        </authorList>
    </citation>
    <scope>FUNCTION</scope>
</reference>
<reference key="10">
    <citation type="journal article" date="2008" name="Nat. Struct. Mol. Biol.">
        <title>Capped small RNAs and MOV10 in human hepatitis delta virus replication.</title>
        <authorList>
            <person name="Haussecker D."/>
            <person name="Cao D."/>
            <person name="Huang Y."/>
            <person name="Parameswaran P."/>
            <person name="Fire A.Z."/>
            <person name="Kay M.A."/>
        </authorList>
    </citation>
    <scope>FUNCTION</scope>
</reference>
<reference key="11">
    <citation type="journal article" date="2009" name="Cell">
        <title>Importin 8 is a gene silencing factor that targets argonaute proteins to distinct mRNAs.</title>
        <authorList>
            <person name="Weinmann L."/>
            <person name="Hoeck J."/>
            <person name="Ivacevic T."/>
            <person name="Ohrt T."/>
            <person name="Muetze J."/>
            <person name="Schwille P."/>
            <person name="Kremmer E."/>
            <person name="Benes V."/>
            <person name="Urlaub H."/>
            <person name="Meister G."/>
        </authorList>
    </citation>
    <scope>INTERACTION WITH EIF4B; IMP8; PRMT5; TNRC6A AND TNRC6B</scope>
    <scope>SUBCELLULAR LOCATION</scope>
</reference>
<accession>Q9HCK5</accession>
<accession>A7MD27</accession>
<evidence type="ECO:0000250" key="1">
    <source>
        <dbReference type="UniProtKB" id="Q9UKV8"/>
    </source>
</evidence>
<evidence type="ECO:0000255" key="2">
    <source>
        <dbReference type="HAMAP-Rule" id="MF_03033"/>
    </source>
</evidence>
<evidence type="ECO:0000255" key="3">
    <source>
        <dbReference type="PROSITE-ProRule" id="PRU00142"/>
    </source>
</evidence>
<evidence type="ECO:0000256" key="4">
    <source>
        <dbReference type="SAM" id="MobiDB-lite"/>
    </source>
</evidence>
<evidence type="ECO:0000269" key="5">
    <source>
    </source>
</evidence>
<evidence type="ECO:0000269" key="6">
    <source>
    </source>
</evidence>
<evidence type="ECO:0000269" key="7">
    <source>
    </source>
</evidence>
<evidence type="ECO:0000269" key="8">
    <source>
    </source>
</evidence>
<evidence type="ECO:0000269" key="9">
    <source>
    </source>
</evidence>
<evidence type="ECO:0000269" key="10">
    <source>
    </source>
</evidence>
<evidence type="ECO:0000305" key="11"/>
<evidence type="ECO:0007829" key="12">
    <source>
        <dbReference type="PDB" id="6OON"/>
    </source>
</evidence>
<feature type="chain" id="PRO_0000194063" description="Protein argonaute-4">
    <location>
        <begin position="1"/>
        <end position="861"/>
    </location>
</feature>
<feature type="domain" description="PAZ" evidence="3">
    <location>
        <begin position="219"/>
        <end position="338"/>
    </location>
</feature>
<feature type="domain" description="Piwi" evidence="2">
    <location>
        <begin position="509"/>
        <end position="820"/>
    </location>
</feature>
<feature type="region of interest" description="Disordered" evidence="4">
    <location>
        <begin position="825"/>
        <end position="846"/>
    </location>
</feature>
<feature type="strand" evidence="12">
    <location>
        <begin position="25"/>
        <end position="38"/>
    </location>
</feature>
<feature type="strand" evidence="12">
    <location>
        <begin position="43"/>
        <end position="54"/>
    </location>
</feature>
<feature type="helix" evidence="12">
    <location>
        <begin position="58"/>
        <end position="71"/>
    </location>
</feature>
<feature type="helix" evidence="12">
    <location>
        <begin position="73"/>
        <end position="77"/>
    </location>
</feature>
<feature type="strand" evidence="12">
    <location>
        <begin position="86"/>
        <end position="94"/>
    </location>
</feature>
<feature type="turn" evidence="12">
    <location>
        <begin position="97"/>
        <end position="100"/>
    </location>
</feature>
<feature type="strand" evidence="12">
    <location>
        <begin position="103"/>
        <end position="108"/>
    </location>
</feature>
<feature type="strand" evidence="12">
    <location>
        <begin position="117"/>
        <end position="129"/>
    </location>
</feature>
<feature type="helix" evidence="12">
    <location>
        <begin position="130"/>
        <end position="137"/>
    </location>
</feature>
<feature type="strand" evidence="12">
    <location>
        <begin position="140"/>
        <end position="143"/>
    </location>
</feature>
<feature type="helix" evidence="12">
    <location>
        <begin position="146"/>
        <end position="163"/>
    </location>
</feature>
<feature type="strand" evidence="12">
    <location>
        <begin position="164"/>
        <end position="167"/>
    </location>
</feature>
<feature type="strand" evidence="12">
    <location>
        <begin position="170"/>
        <end position="173"/>
    </location>
</feature>
<feature type="strand" evidence="12">
    <location>
        <begin position="181"/>
        <end position="183"/>
    </location>
</feature>
<feature type="strand" evidence="12">
    <location>
        <begin position="186"/>
        <end position="198"/>
    </location>
</feature>
<feature type="strand" evidence="12">
    <location>
        <begin position="200"/>
        <end position="215"/>
    </location>
</feature>
<feature type="helix" evidence="12">
    <location>
        <begin position="220"/>
        <end position="227"/>
    </location>
</feature>
<feature type="helix" evidence="12">
    <location>
        <begin position="242"/>
        <end position="252"/>
    </location>
</feature>
<feature type="strand" evidence="12">
    <location>
        <begin position="256"/>
        <end position="258"/>
    </location>
</feature>
<feature type="strand" evidence="12">
    <location>
        <begin position="268"/>
        <end position="270"/>
    </location>
</feature>
<feature type="strand" evidence="12">
    <location>
        <begin position="272"/>
        <end position="274"/>
    </location>
</feature>
<feature type="turn" evidence="12">
    <location>
        <begin position="279"/>
        <end position="281"/>
    </location>
</feature>
<feature type="strand" evidence="12">
    <location>
        <begin position="283"/>
        <end position="285"/>
    </location>
</feature>
<feature type="strand" evidence="12">
    <location>
        <begin position="295"/>
        <end position="297"/>
    </location>
</feature>
<feature type="helix" evidence="12">
    <location>
        <begin position="298"/>
        <end position="304"/>
    </location>
</feature>
<feature type="strand" evidence="12">
    <location>
        <begin position="317"/>
        <end position="319"/>
    </location>
</feature>
<feature type="strand" evidence="12">
    <location>
        <begin position="328"/>
        <end position="330"/>
    </location>
</feature>
<feature type="helix" evidence="12">
    <location>
        <begin position="331"/>
        <end position="333"/>
    </location>
</feature>
<feature type="helix" evidence="12">
    <location>
        <begin position="348"/>
        <end position="358"/>
    </location>
</feature>
<feature type="helix" evidence="12">
    <location>
        <begin position="362"/>
        <end position="374"/>
    </location>
</feature>
<feature type="helix" evidence="12">
    <location>
        <begin position="384"/>
        <end position="388"/>
    </location>
</feature>
<feature type="strand" evidence="12">
    <location>
        <begin position="398"/>
        <end position="404"/>
    </location>
</feature>
<feature type="strand" evidence="12">
    <location>
        <begin position="442"/>
        <end position="447"/>
    </location>
</feature>
<feature type="turn" evidence="12">
    <location>
        <begin position="451"/>
        <end position="453"/>
    </location>
</feature>
<feature type="helix" evidence="12">
    <location>
        <begin position="456"/>
        <end position="472"/>
    </location>
</feature>
<feature type="strand" evidence="12">
    <location>
        <begin position="482"/>
        <end position="486"/>
    </location>
</feature>
<feature type="helix" evidence="12">
    <location>
        <begin position="490"/>
        <end position="492"/>
    </location>
</feature>
<feature type="helix" evidence="12">
    <location>
        <begin position="493"/>
        <end position="503"/>
    </location>
</feature>
<feature type="strand" evidence="12">
    <location>
        <begin position="509"/>
        <end position="514"/>
    </location>
</feature>
<feature type="helix" evidence="12">
    <location>
        <begin position="520"/>
        <end position="529"/>
    </location>
</feature>
<feature type="turn" evidence="12">
    <location>
        <begin position="530"/>
        <end position="532"/>
    </location>
</feature>
<feature type="strand" evidence="12">
    <location>
        <begin position="536"/>
        <end position="540"/>
    </location>
</feature>
<feature type="helix" evidence="12">
    <location>
        <begin position="542"/>
        <end position="545"/>
    </location>
</feature>
<feature type="helix" evidence="12">
    <location>
        <begin position="549"/>
        <end position="562"/>
    </location>
</feature>
<feature type="helix" evidence="12">
    <location>
        <begin position="572"/>
        <end position="574"/>
    </location>
</feature>
<feature type="helix" evidence="12">
    <location>
        <begin position="577"/>
        <end position="580"/>
    </location>
</feature>
<feature type="strand" evidence="12">
    <location>
        <begin position="583"/>
        <end position="591"/>
    </location>
</feature>
<feature type="strand" evidence="12">
    <location>
        <begin position="602"/>
        <end position="609"/>
    </location>
</feature>
<feature type="strand" evidence="12">
    <location>
        <begin position="611"/>
        <end position="614"/>
    </location>
</feature>
<feature type="strand" evidence="12">
    <location>
        <begin position="617"/>
        <end position="624"/>
    </location>
</feature>
<feature type="turn" evidence="12">
    <location>
        <begin position="637"/>
        <end position="639"/>
    </location>
</feature>
<feature type="helix" evidence="12">
    <location>
        <begin position="644"/>
        <end position="659"/>
    </location>
</feature>
<feature type="strand" evidence="12">
    <location>
        <begin position="664"/>
        <end position="670"/>
    </location>
</feature>
<feature type="helix" evidence="12">
    <location>
        <begin position="675"/>
        <end position="696"/>
    </location>
</feature>
<feature type="strand" evidence="12">
    <location>
        <begin position="703"/>
        <end position="710"/>
    </location>
</feature>
<feature type="strand" evidence="12">
    <location>
        <begin position="717"/>
        <end position="721"/>
    </location>
</feature>
<feature type="helix" evidence="12">
    <location>
        <begin position="722"/>
        <end position="724"/>
    </location>
</feature>
<feature type="turn" evidence="12">
    <location>
        <begin position="727"/>
        <end position="730"/>
    </location>
</feature>
<feature type="strand" evidence="12">
    <location>
        <begin position="736"/>
        <end position="738"/>
    </location>
</feature>
<feature type="strand" evidence="12">
    <location>
        <begin position="740"/>
        <end position="743"/>
    </location>
</feature>
<feature type="strand" evidence="12">
    <location>
        <begin position="745"/>
        <end position="747"/>
    </location>
</feature>
<feature type="strand" evidence="12">
    <location>
        <begin position="749"/>
        <end position="753"/>
    </location>
</feature>
<feature type="strand" evidence="12">
    <location>
        <begin position="765"/>
        <end position="772"/>
    </location>
</feature>
<feature type="helix" evidence="12">
    <location>
        <begin position="778"/>
        <end position="788"/>
    </location>
</feature>
<feature type="helix" evidence="12">
    <location>
        <begin position="803"/>
        <end position="818"/>
    </location>
</feature>
<feature type="helix" evidence="12">
    <location>
        <begin position="841"/>
        <end position="847"/>
    </location>
</feature>
<feature type="turn" evidence="12">
    <location>
        <begin position="852"/>
        <end position="856"/>
    </location>
</feature>
<keyword id="KW-0002">3D-structure</keyword>
<keyword id="KW-0963">Cytoplasm</keyword>
<keyword id="KW-1267">Proteomics identification</keyword>
<keyword id="KW-1185">Reference proteome</keyword>
<keyword id="KW-0687">Ribonucleoprotein</keyword>
<keyword id="KW-0694">RNA-binding</keyword>
<keyword id="KW-0943">RNA-mediated gene silencing</keyword>
<keyword id="KW-0810">Translation regulation</keyword>
<keyword id="KW-0832">Ubl conjugation</keyword>
<name>AGO4_HUMAN</name>
<proteinExistence type="evidence at protein level"/>
<sequence>MEALGPGPPASLFQPPRRPGLGTVGKPIRLLANHFQVQIPKIDVYHYDVDIKPEKRPRRVNREVVDTMVRHFKMQIFGDRQPGYDGKRNMYTAHPLPIGRDRVDMEVTLPGEGKDQTFKVSVQWVSVVSLQLLLEALAGHLNEVPDDSVQALDVITRHLPSMRYTPVGRSFFSPPEGYYHPLGGGREVWFGFHQSVRPAMWNMMLNIDVSATAFYRAQPIIEFMCEVLDIQNINEQTKPLTDSQRVKFTKEIRGLKVEVTHCGQMKRKYRVCNVTRRPASHQTFPLQLENGQAMECTVAQYFKQKYSLQLKYPHLPCLQVGQEQKHTYLPLEVCNIVAGQRCIKKLTDNQTSTMIKATARSAPDRQEEISRLVKSNSMVGGPDPYLKEFGIVVHNEMTELTGRVLPAPMLQYGGRNKTVATPNQGVWDMRGKQFYAGIEIKVWAVACFAPQKQCREDLLKSFTDQLRKISKDAGMPIQGQPCFCKYAQGADSVEPMFKHLKMTYVGLQLIVVILPGKTPVYAEVKRVGDTLLGMATQCVQVKNVVKTSPQTLSNLCLKINAKLGGINNVLVPHQRPSVFQQPVIFLGADVTHPPAGDGKKPSIAAVVGSMDGHPSRYCATVRVQTSRQEISQELLYSQEVIQDLTNMVRELLIQFYKSTRFKPTRIIYYRGGVSEGQMKQVAWPELIAIRKACISLEEDYRPGITYIVVQKRHHTRLFCADKTERVGKSGNVPAGTTVDSTITHPSEFDFYLCSHAGIQGTSRPSHYQVLWDDNCFTADELQLLTYQLCHTYVRCTRSVSIPAPAYYARLVAFRARYHLVDKDHDSAEGSHVSGQSNGRDPQALAKAVQIHHDTQHTMYFA</sequence>
<organism>
    <name type="scientific">Homo sapiens</name>
    <name type="common">Human</name>
    <dbReference type="NCBI Taxonomy" id="9606"/>
    <lineage>
        <taxon>Eukaryota</taxon>
        <taxon>Metazoa</taxon>
        <taxon>Chordata</taxon>
        <taxon>Craniata</taxon>
        <taxon>Vertebrata</taxon>
        <taxon>Euteleostomi</taxon>
        <taxon>Mammalia</taxon>
        <taxon>Eutheria</taxon>
        <taxon>Euarchontoglires</taxon>
        <taxon>Primates</taxon>
        <taxon>Haplorrhini</taxon>
        <taxon>Catarrhini</taxon>
        <taxon>Hominidae</taxon>
        <taxon>Homo</taxon>
    </lineage>
</organism>
<protein>
    <recommendedName>
        <fullName evidence="2">Protein argonaute-4</fullName>
        <shortName evidence="2">Argonaute4</shortName>
        <shortName>hAgo4</shortName>
    </recommendedName>
    <alternativeName>
        <fullName>Argonaute RISC catalytic component 4</fullName>
    </alternativeName>
    <alternativeName>
        <fullName evidence="2">Eukaryotic translation initiation factor 2C 4</fullName>
        <shortName evidence="2">eIF-2C 4</shortName>
        <shortName evidence="2">eIF2C 4</shortName>
    </alternativeName>
</protein>
<comment type="function">
    <text evidence="2 5 8 9">Required for RNA-mediated gene silencing (RNAi). Binds to short RNAs such as microRNAs (miRNAs) and represses the translation of mRNAs which are complementary to them. Lacks endonuclease activity and does not appear to cleave target mRNAs. Also required for RNA-directed transcription and replication of the human hapatitis delta virus (HDV).</text>
</comment>
<comment type="subunit">
    <text evidence="2 6 10">Interacts with EIF4B, IMP8, PRMT5, TNRC6A and TNRC6B (PubMed:19167051). Interacts with ZFP36 (PubMed:15766526).</text>
</comment>
<comment type="interaction">
    <interactant intactId="EBI-2269696">
        <id>Q9HCK5</id>
    </interactant>
    <interactant intactId="EBI-358808">
        <id>O15397</id>
        <label>IPO8</label>
    </interactant>
    <organismsDiffer>false</organismsDiffer>
    <experiments>3</experiments>
</comment>
<comment type="interaction">
    <interactant intactId="EBI-2269696">
        <id>Q9HCK5</id>
    </interactant>
    <interactant intactId="EBI-2269715">
        <id>Q8NDV7</id>
        <label>TNRC6A</label>
    </interactant>
    <organismsDiffer>false</organismsDiffer>
    <experiments>5</experiments>
</comment>
<comment type="interaction">
    <interactant intactId="EBI-2269696">
        <id>Q9HCK5</id>
    </interactant>
    <interactant intactId="EBI-6507625">
        <id>Q9HCJ0</id>
        <label>TNRC6C</label>
    </interactant>
    <organismsDiffer>false</organismsDiffer>
    <experiments>3</experiments>
</comment>
<comment type="subcellular location">
    <subcellularLocation>
        <location evidence="2 7 10">Cytoplasm</location>
        <location evidence="2 7 10">P-body</location>
    </subcellularLocation>
</comment>
<comment type="PTM">
    <text evidence="1">Ubiquitinated on surface-exposed lysines by a SCF-like E3 ubiquitin-protein ligase complex containing ZSWIM8 during target-directed microRNA degradation (TDMD), a process that mediates degradation of microRNAs (miRNAs). Ubiquitination by the SCF-like E3 ubiquitin-protein ligase complex containing ZSWIM8 leads to its subsequent degradation, thereby exposing miRNAs for degradation. ZSWIM8 recognizes and binds AGO4 when it is engaged with a TDMD target.</text>
</comment>
<comment type="similarity">
    <text evidence="2">Belongs to the argonaute family. Ago subfamily.</text>
</comment>
<comment type="sequence caution" evidence="11">
    <conflict type="erroneous initiation">
        <sequence resource="EMBL-CDS" id="BAB13393"/>
    </conflict>
</comment>